<accession>P0DXC9</accession>
<evidence type="ECO:0000255" key="1">
    <source>
        <dbReference type="PROSITE-ProRule" id="PRU00345"/>
    </source>
</evidence>
<evidence type="ECO:0000303" key="2">
    <source>
    </source>
</evidence>
<evidence type="ECO:0000305" key="3"/>
<evidence type="ECO:0000305" key="4">
    <source>
    </source>
</evidence>
<keyword id="KW-0238">DNA-binding</keyword>
<keyword id="KW-0804">Transcription</keyword>
<keyword id="KW-0805">Transcription regulation</keyword>
<comment type="function">
    <text evidence="4">Transcription regulator that regulates expression of the bilirubin reductase operon (bilQ, bilR and bilS).</text>
</comment>
<dbReference type="EMBL" id="AVGI01000263">
    <property type="protein sequence ID" value="EQE01911.1"/>
    <property type="molecule type" value="Genomic_DNA"/>
</dbReference>
<dbReference type="RefSeq" id="WP_003436142.1">
    <property type="nucleotide sequence ID" value="NZ_AVGI01000263.1"/>
</dbReference>
<dbReference type="SMR" id="P0DXC9"/>
<dbReference type="GeneID" id="66355235"/>
<dbReference type="GO" id="GO:0003677">
    <property type="term" value="F:DNA binding"/>
    <property type="evidence" value="ECO:0007669"/>
    <property type="project" value="UniProtKB-KW"/>
</dbReference>
<dbReference type="GO" id="GO:0003700">
    <property type="term" value="F:DNA-binding transcription factor activity"/>
    <property type="evidence" value="ECO:0007669"/>
    <property type="project" value="InterPro"/>
</dbReference>
<dbReference type="Gene3D" id="1.10.10.10">
    <property type="entry name" value="Winged helix-like DNA-binding domain superfamily/Winged helix DNA-binding domain"/>
    <property type="match status" value="1"/>
</dbReference>
<dbReference type="InterPro" id="IPR054630">
    <property type="entry name" value="BilQ"/>
</dbReference>
<dbReference type="InterPro" id="IPR000835">
    <property type="entry name" value="HTH_MarR-typ"/>
</dbReference>
<dbReference type="InterPro" id="IPR036388">
    <property type="entry name" value="WH-like_DNA-bd_sf"/>
</dbReference>
<dbReference type="InterPro" id="IPR036390">
    <property type="entry name" value="WH_DNA-bd_sf"/>
</dbReference>
<dbReference type="NCBIfam" id="NF045593">
    <property type="entry name" value="bilirub_TF_BilQ"/>
    <property type="match status" value="1"/>
</dbReference>
<dbReference type="PANTHER" id="PTHR42756">
    <property type="entry name" value="TRANSCRIPTIONAL REGULATOR, MARR"/>
    <property type="match status" value="1"/>
</dbReference>
<dbReference type="PANTHER" id="PTHR42756:SF1">
    <property type="entry name" value="TRANSCRIPTIONAL REPRESSOR OF EMRAB OPERON"/>
    <property type="match status" value="1"/>
</dbReference>
<dbReference type="Pfam" id="PF01047">
    <property type="entry name" value="MarR"/>
    <property type="match status" value="1"/>
</dbReference>
<dbReference type="PRINTS" id="PR00598">
    <property type="entry name" value="HTHMARR"/>
</dbReference>
<dbReference type="SMART" id="SM00347">
    <property type="entry name" value="HTH_MARR"/>
    <property type="match status" value="1"/>
</dbReference>
<dbReference type="SUPFAM" id="SSF46785">
    <property type="entry name" value="Winged helix' DNA-binding domain"/>
    <property type="match status" value="1"/>
</dbReference>
<dbReference type="PROSITE" id="PS50995">
    <property type="entry name" value="HTH_MARR_2"/>
    <property type="match status" value="1"/>
</dbReference>
<sequence length="148" mass="17592">MDFKNLQYESLSYIICNLQKNFKLYCEKCLKPYKLTNGLYFYLIYINKNRNCSLNDVSTEFEVDKAHTTRTISRLEQDGYIEKIQNPNDSRAFQLRVTDKGEEVLGDIKNIFSKWDNHIKKEFSDTEYKELVKNLHVVKDIKTAVEEE</sequence>
<feature type="chain" id="PRO_0000460434" description="HTH-type transcriptional regulator BilQ">
    <location>
        <begin position="1"/>
        <end position="148"/>
    </location>
</feature>
<feature type="domain" description="HTH marR-type" evidence="1">
    <location>
        <begin position="1"/>
        <end position="140"/>
    </location>
</feature>
<feature type="DNA-binding region" description="H-T-H motif" evidence="1">
    <location>
        <begin position="54"/>
        <end position="77"/>
    </location>
</feature>
<name>BILQ_CLOD3</name>
<proteinExistence type="predicted"/>
<protein>
    <recommendedName>
        <fullName evidence="3">HTH-type transcriptional regulator BilQ</fullName>
    </recommendedName>
    <alternativeName>
        <fullName evidence="2">Bilirubin reductase operon protein Q</fullName>
    </alternativeName>
</protein>
<reference key="1">
    <citation type="submission" date="2013-06" db="EMBL/GenBank/DDBJ databases">
        <authorList>
            <person name="Walk S."/>
            <person name="Aronoff D."/>
            <person name="Young V.Y."/>
            <person name="Marsh J."/>
            <person name="Harrison L."/>
            <person name="Daugherty S.C."/>
            <person name="Shefchek K.A."/>
            <person name="Hine E.E."/>
            <person name="Tallon L.J."/>
            <person name="Sadzewicz L.K."/>
            <person name="Rasko D.A."/>
        </authorList>
    </citation>
    <scope>NUCLEOTIDE SEQUENCE [LARGE SCALE GENOMIC DNA]</scope>
    <source>
        <strain>CD3</strain>
    </source>
</reference>
<reference key="2">
    <citation type="journal article" date="2024" name="Nat. Microbiol.">
        <title>BilR is a gut microbial enzyme that reduces bilirubin to urobilinogen.</title>
        <authorList>
            <person name="Hall B."/>
            <person name="Levy S."/>
            <person name="Dufault-Thompson K."/>
            <person name="Arp G."/>
            <person name="Zhong A."/>
            <person name="Ndjite G.M."/>
            <person name="Weiss A."/>
            <person name="Braccia D."/>
            <person name="Jenkins C."/>
            <person name="Grant M.R."/>
            <person name="Abeysinghe S."/>
            <person name="Yang Y."/>
            <person name="Jermain M.D."/>
            <person name="Wu C.H."/>
            <person name="Ma B."/>
            <person name="Jiang X."/>
        </authorList>
    </citation>
    <scope>POSSIBLE FUNCTION</scope>
</reference>
<organism>
    <name type="scientific">Clostridioides difficile (strain CD3)</name>
    <dbReference type="NCBI Taxonomy" id="1151252"/>
    <lineage>
        <taxon>Bacteria</taxon>
        <taxon>Bacillati</taxon>
        <taxon>Bacillota</taxon>
        <taxon>Clostridia</taxon>
        <taxon>Peptostreptococcales</taxon>
        <taxon>Peptostreptococcaceae</taxon>
        <taxon>Clostridioides</taxon>
    </lineage>
</organism>
<gene>
    <name evidence="2" type="primary">bilQ</name>
    <name type="ORF">QAO_2848</name>
</gene>